<name>H2B_COCIM</name>
<feature type="initiator methionine" description="Removed" evidence="1">
    <location>
        <position position="1"/>
    </location>
</feature>
<feature type="chain" id="PRO_0000297848" description="Histone H2B">
    <location>
        <begin position="2"/>
        <end position="139"/>
    </location>
</feature>
<feature type="region of interest" description="Disordered" evidence="2">
    <location>
        <begin position="1"/>
        <end position="47"/>
    </location>
</feature>
<feature type="compositionally biased region" description="Basic and acidic residues" evidence="2">
    <location>
        <begin position="1"/>
        <end position="10"/>
    </location>
</feature>
<feature type="compositionally biased region" description="Low complexity" evidence="2">
    <location>
        <begin position="11"/>
        <end position="22"/>
    </location>
</feature>
<feature type="modified residue" description="N6-acetyllysine; alternate" evidence="1">
    <location>
        <position position="8"/>
    </location>
</feature>
<feature type="modified residue" description="N6-acetyllysine; alternate" evidence="1">
    <location>
        <position position="9"/>
    </location>
</feature>
<feature type="modified residue" description="N6-acetyllysine" evidence="1">
    <location>
        <position position="15"/>
    </location>
</feature>
<feature type="modified residue" description="N6-acetyllysine; alternate" evidence="1">
    <location>
        <position position="26"/>
    </location>
</feature>
<feature type="cross-link" description="Glycyl lysine isopeptide (Lys-Gly) (interchain with G-Cter in SUMO); alternate" evidence="1">
    <location>
        <position position="8"/>
    </location>
</feature>
<feature type="cross-link" description="Glycyl lysine isopeptide (Lys-Gly) (interchain with G-Cter in SUMO); alternate" evidence="1">
    <location>
        <position position="9"/>
    </location>
</feature>
<feature type="cross-link" description="Glycyl lysine isopeptide (Lys-Gly) (interchain with G-Cter in SUMO); alternate" evidence="1">
    <location>
        <position position="26"/>
    </location>
</feature>
<feature type="cross-link" description="Glycyl lysine isopeptide (Lys-Gly) (interchain with G-Cter in SUMO)" evidence="1">
    <location>
        <position position="27"/>
    </location>
</feature>
<feature type="cross-link" description="Glycyl lysine isopeptide (Lys-Gly) (interchain with G-Cter in ubiquitin)" evidence="1">
    <location>
        <position position="133"/>
    </location>
</feature>
<accession>Q1E5N0</accession>
<accession>J3KL20</accession>
<sequence length="139" mass="14871">MAPKAAEKKPSTGGKAPAGGKAPAEKKEAGKKTAASGEKKKRTKARKETYSSYIYKVLKQVHPDTGISNRAMSILNSFVNDIFERVATEASKLAAYNKKSTISSREIQTSVRLILPGELAKHAVSEGTKAVTKYSSSAK</sequence>
<dbReference type="EMBL" id="GG704911">
    <property type="protein sequence ID" value="EAS36779.3"/>
    <property type="molecule type" value="Genomic_DNA"/>
</dbReference>
<dbReference type="RefSeq" id="XP_001248362.1">
    <property type="nucleotide sequence ID" value="XM_001248361.2"/>
</dbReference>
<dbReference type="SMR" id="Q1E5N0"/>
<dbReference type="FunCoup" id="Q1E5N0">
    <property type="interactions" value="952"/>
</dbReference>
<dbReference type="STRING" id="246410.Q1E5N0"/>
<dbReference type="GeneID" id="4568198"/>
<dbReference type="KEGG" id="cim:CIMG_02133"/>
<dbReference type="VEuPathDB" id="FungiDB:CIMG_02133"/>
<dbReference type="InParanoid" id="Q1E5N0"/>
<dbReference type="OMA" id="FCPFAIR"/>
<dbReference type="OrthoDB" id="10254238at2759"/>
<dbReference type="Proteomes" id="UP000001261">
    <property type="component" value="Unassembled WGS sequence"/>
</dbReference>
<dbReference type="GO" id="GO:0000786">
    <property type="term" value="C:nucleosome"/>
    <property type="evidence" value="ECO:0007669"/>
    <property type="project" value="UniProtKB-KW"/>
</dbReference>
<dbReference type="GO" id="GO:0005634">
    <property type="term" value="C:nucleus"/>
    <property type="evidence" value="ECO:0007669"/>
    <property type="project" value="UniProtKB-SubCell"/>
</dbReference>
<dbReference type="GO" id="GO:0003677">
    <property type="term" value="F:DNA binding"/>
    <property type="evidence" value="ECO:0007669"/>
    <property type="project" value="UniProtKB-KW"/>
</dbReference>
<dbReference type="GO" id="GO:0046982">
    <property type="term" value="F:protein heterodimerization activity"/>
    <property type="evidence" value="ECO:0007669"/>
    <property type="project" value="InterPro"/>
</dbReference>
<dbReference type="GO" id="GO:0030527">
    <property type="term" value="F:structural constituent of chromatin"/>
    <property type="evidence" value="ECO:0007669"/>
    <property type="project" value="InterPro"/>
</dbReference>
<dbReference type="CDD" id="cd22910">
    <property type="entry name" value="HFD_H2B"/>
    <property type="match status" value="1"/>
</dbReference>
<dbReference type="FunFam" id="1.10.20.10:FF:000014">
    <property type="entry name" value="Histone H2B"/>
    <property type="match status" value="1"/>
</dbReference>
<dbReference type="Gene3D" id="1.10.20.10">
    <property type="entry name" value="Histone, subunit A"/>
    <property type="match status" value="1"/>
</dbReference>
<dbReference type="InterPro" id="IPR009072">
    <property type="entry name" value="Histone-fold"/>
</dbReference>
<dbReference type="InterPro" id="IPR007125">
    <property type="entry name" value="Histone_H2A/H2B/H3"/>
</dbReference>
<dbReference type="InterPro" id="IPR000558">
    <property type="entry name" value="Histone_H2B"/>
</dbReference>
<dbReference type="InterPro" id="IPR055333">
    <property type="entry name" value="HISTONE_H2B_site"/>
</dbReference>
<dbReference type="PANTHER" id="PTHR23428">
    <property type="entry name" value="HISTONE H2B"/>
    <property type="match status" value="1"/>
</dbReference>
<dbReference type="Pfam" id="PF00125">
    <property type="entry name" value="Histone"/>
    <property type="match status" value="1"/>
</dbReference>
<dbReference type="PRINTS" id="PR00621">
    <property type="entry name" value="HISTONEH2B"/>
</dbReference>
<dbReference type="SMART" id="SM00427">
    <property type="entry name" value="H2B"/>
    <property type="match status" value="1"/>
</dbReference>
<dbReference type="SUPFAM" id="SSF47113">
    <property type="entry name" value="Histone-fold"/>
    <property type="match status" value="1"/>
</dbReference>
<dbReference type="PROSITE" id="PS00357">
    <property type="entry name" value="HISTONE_H2B"/>
    <property type="match status" value="1"/>
</dbReference>
<comment type="function">
    <text>Core component of nucleosome. Nucleosomes wrap and compact DNA into chromatin, limiting DNA accessibility to the cellular machineries which require DNA as a template. Histones thereby play a central role in transcription regulation, DNA repair, DNA replication and chromosomal stability. DNA accessibility is regulated via a complex set of post-translational modifications of histones, also called histone code, and nucleosome remodeling.</text>
</comment>
<comment type="subunit">
    <text>The nucleosome is a histone octamer containing two molecules each of H2A, H2B, H3 and H4 assembled in one H3-H4 heterotetramer and two H2A-H2B heterodimers. The octamer wraps approximately 147 bp of DNA.</text>
</comment>
<comment type="subcellular location">
    <subcellularLocation>
        <location evidence="1">Nucleus</location>
    </subcellularLocation>
    <subcellularLocation>
        <location evidence="1">Chromosome</location>
    </subcellularLocation>
</comment>
<comment type="PTM">
    <text evidence="1">Monoubiquitinated by the UBC2-BRE1 complex to form H2BK123ub1. H2BK123ub1 gives a specific tag for epigenetic transcriptional activation and is also prerequisite for H3K4me and H3K79me formation. H2BK123ub1 also modulates the formation of double-strand breaks during meiosis and is a prerequisite for DNA-damage checkpoint activation (By similarity).</text>
</comment>
<comment type="PTM">
    <text evidence="1">Acetylated by GCN5 to form H2BK11ac and H2BK16ac. H2BK16ac can also be formed by ESA1. Acetylation of N-terminal lysines and particularly formation of H2BK11acK16ac has a positive effect on transcription (By similarity).</text>
</comment>
<comment type="PTM">
    <text evidence="1">Sumoylation to form H2BK6su or H2BK7su, and probably also H2BK16su or H2BK17su, occurs preferentially near the telomeres and represses gene transcription.</text>
</comment>
<comment type="similarity">
    <text evidence="3">Belongs to the histone H2B family.</text>
</comment>
<comment type="caution">
    <text evidence="3">To ensure consistency between histone entries, we follow the 'Brno' nomenclature for histone modifications, with positions referring to those used in the literature for the 'closest' model organism. Due to slight variations in histone sequences between organisms and to the presence of initiator methionine in UniProtKB/Swiss-Prot sequences, the actual positions of modified amino acids in the sequence generally differ. In this entry the following conventions are used: H2BK6ac = acetylated Lys-8; H2BK6su = sumoylated Lys-8; H2BK7ac = acetylated Lys-9; H2BK7su = sumoylated Lys-9; H2BK11ac = acetylated Lys-15; H2BK16ac = acetylated Lys-26; H2BK16su = sumoylated Lys-26; H2BK17su = sumoylated Lys-27; H2BK123ub1 = monoubiquitinated Lys-133.</text>
</comment>
<keyword id="KW-0007">Acetylation</keyword>
<keyword id="KW-0158">Chromosome</keyword>
<keyword id="KW-0238">DNA-binding</keyword>
<keyword id="KW-1017">Isopeptide bond</keyword>
<keyword id="KW-0544">Nucleosome core</keyword>
<keyword id="KW-0539">Nucleus</keyword>
<keyword id="KW-1185">Reference proteome</keyword>
<keyword id="KW-0832">Ubl conjugation</keyword>
<gene>
    <name type="primary">HTB1</name>
    <name type="ORF">CIMG_02133</name>
</gene>
<proteinExistence type="inferred from homology"/>
<protein>
    <recommendedName>
        <fullName>Histone H2B</fullName>
    </recommendedName>
</protein>
<evidence type="ECO:0000250" key="1"/>
<evidence type="ECO:0000256" key="2">
    <source>
        <dbReference type="SAM" id="MobiDB-lite"/>
    </source>
</evidence>
<evidence type="ECO:0000305" key="3"/>
<reference key="1">
    <citation type="journal article" date="2009" name="Genome Res.">
        <title>Comparative genomic analyses of the human fungal pathogens Coccidioides and their relatives.</title>
        <authorList>
            <person name="Sharpton T.J."/>
            <person name="Stajich J.E."/>
            <person name="Rounsley S.D."/>
            <person name="Gardner M.J."/>
            <person name="Wortman J.R."/>
            <person name="Jordar V.S."/>
            <person name="Maiti R."/>
            <person name="Kodira C.D."/>
            <person name="Neafsey D.E."/>
            <person name="Zeng Q."/>
            <person name="Hung C.-Y."/>
            <person name="McMahan C."/>
            <person name="Muszewska A."/>
            <person name="Grynberg M."/>
            <person name="Mandel M.A."/>
            <person name="Kellner E.M."/>
            <person name="Barker B.M."/>
            <person name="Galgiani J.N."/>
            <person name="Orbach M.J."/>
            <person name="Kirkland T.N."/>
            <person name="Cole G.T."/>
            <person name="Henn M.R."/>
            <person name="Birren B.W."/>
            <person name="Taylor J.W."/>
        </authorList>
    </citation>
    <scope>NUCLEOTIDE SEQUENCE [LARGE SCALE GENOMIC DNA]</scope>
    <source>
        <strain>RS</strain>
    </source>
</reference>
<reference key="2">
    <citation type="journal article" date="2010" name="Genome Res.">
        <title>Population genomic sequencing of Coccidioides fungi reveals recent hybridization and transposon control.</title>
        <authorList>
            <person name="Neafsey D.E."/>
            <person name="Barker B.M."/>
            <person name="Sharpton T.J."/>
            <person name="Stajich J.E."/>
            <person name="Park D.J."/>
            <person name="Whiston E."/>
            <person name="Hung C.-Y."/>
            <person name="McMahan C."/>
            <person name="White J."/>
            <person name="Sykes S."/>
            <person name="Heiman D."/>
            <person name="Young S."/>
            <person name="Zeng Q."/>
            <person name="Abouelleil A."/>
            <person name="Aftuck L."/>
            <person name="Bessette D."/>
            <person name="Brown A."/>
            <person name="FitzGerald M."/>
            <person name="Lui A."/>
            <person name="Macdonald J.P."/>
            <person name="Priest M."/>
            <person name="Orbach M.J."/>
            <person name="Galgiani J.N."/>
            <person name="Kirkland T.N."/>
            <person name="Cole G.T."/>
            <person name="Birren B.W."/>
            <person name="Henn M.R."/>
            <person name="Taylor J.W."/>
            <person name="Rounsley S.D."/>
        </authorList>
    </citation>
    <scope>GENOME REANNOTATION</scope>
    <source>
        <strain>RS</strain>
    </source>
</reference>
<organism>
    <name type="scientific">Coccidioides immitis (strain RS)</name>
    <name type="common">Valley fever fungus</name>
    <dbReference type="NCBI Taxonomy" id="246410"/>
    <lineage>
        <taxon>Eukaryota</taxon>
        <taxon>Fungi</taxon>
        <taxon>Dikarya</taxon>
        <taxon>Ascomycota</taxon>
        <taxon>Pezizomycotina</taxon>
        <taxon>Eurotiomycetes</taxon>
        <taxon>Eurotiomycetidae</taxon>
        <taxon>Onygenales</taxon>
        <taxon>Onygenaceae</taxon>
        <taxon>Coccidioides</taxon>
    </lineage>
</organism>